<comment type="catalytic activity">
    <reaction>
        <text>a 1,2-diacyl-sn-glycero-3-phosphate + CTP + H(+) = a CDP-1,2-diacyl-sn-glycerol + diphosphate</text>
        <dbReference type="Rhea" id="RHEA:16229"/>
        <dbReference type="ChEBI" id="CHEBI:15378"/>
        <dbReference type="ChEBI" id="CHEBI:33019"/>
        <dbReference type="ChEBI" id="CHEBI:37563"/>
        <dbReference type="ChEBI" id="CHEBI:58332"/>
        <dbReference type="ChEBI" id="CHEBI:58608"/>
        <dbReference type="EC" id="2.7.7.41"/>
    </reaction>
</comment>
<comment type="pathway">
    <text>Phospholipid metabolism; CDP-diacylglycerol biosynthesis; CDP-diacylglycerol from sn-glycerol 3-phosphate: step 3/3.</text>
</comment>
<comment type="subcellular location">
    <subcellularLocation>
        <location>Cell inner membrane</location>
        <topology>Multi-pass membrane protein</topology>
    </subcellularLocation>
</comment>
<comment type="similarity">
    <text evidence="2">Belongs to the CDS family.</text>
</comment>
<accession>Q59640</accession>
<feature type="chain" id="PRO_0000090744" description="Phosphatidate cytidylyltransferase">
    <location>
        <begin position="1"/>
        <end position="271"/>
    </location>
</feature>
<feature type="transmembrane region" description="Helical" evidence="1">
    <location>
        <begin position="12"/>
        <end position="32"/>
    </location>
</feature>
<feature type="transmembrane region" description="Helical" evidence="1">
    <location>
        <begin position="53"/>
        <end position="73"/>
    </location>
</feature>
<feature type="transmembrane region" description="Helical" evidence="1">
    <location>
        <begin position="75"/>
        <end position="95"/>
    </location>
</feature>
<feature type="transmembrane region" description="Helical" evidence="1">
    <location>
        <begin position="111"/>
        <end position="131"/>
    </location>
</feature>
<feature type="transmembrane region" description="Helical" evidence="1">
    <location>
        <begin position="136"/>
        <end position="156"/>
    </location>
</feature>
<feature type="transmembrane region" description="Helical" evidence="1">
    <location>
        <begin position="174"/>
        <end position="194"/>
    </location>
</feature>
<feature type="transmembrane region" description="Helical" evidence="1">
    <location>
        <begin position="199"/>
        <end position="219"/>
    </location>
</feature>
<feature type="transmembrane region" description="Helical" evidence="1">
    <location>
        <begin position="251"/>
        <end position="271"/>
    </location>
</feature>
<feature type="sequence conflict" description="In Ref. 1; BAA09437." evidence="2" ref="1">
    <original>WPL</original>
    <variation>VAA</variation>
    <location>
        <begin position="131"/>
        <end position="133"/>
    </location>
</feature>
<gene>
    <name type="primary">cdsA</name>
    <name type="synonym">cds</name>
    <name type="ordered locus">PA3651</name>
</gene>
<sequence length="271" mass="28856">MLKQRIITALVLLPIALGGFFLLEGAFFALFIGAVVSLGAWEWARLAGYEQQFGRVAYAATVAVLMVALYHLPQLAGAVLLLALVWWTLATVLVLTYPESVGYWGGRWRRLGMGLLILLPAWQGLVLLKQWPLANGLIIAVMVLVWGADIGAYFSGKAFGKRKLAPRVSPGKSWEGVYGGLAASLAITLAVGLYRGWSLGALLLALLGAALVVFVSIVGDLTESMFKRQSGIKDSSNLLPGHGGVLDRIDSLTAAIPVFAALLWAAGWGAP</sequence>
<protein>
    <recommendedName>
        <fullName>Phosphatidate cytidylyltransferase</fullName>
        <ecNumber>2.7.7.41</ecNumber>
    </recommendedName>
    <alternativeName>
        <fullName>CDP-DAG synthase</fullName>
    </alternativeName>
    <alternativeName>
        <fullName>CDP-DG synthase</fullName>
    </alternativeName>
    <alternativeName>
        <fullName>CDP-diacylglycerol synthase</fullName>
        <shortName>CDS</shortName>
    </alternativeName>
    <alternativeName>
        <fullName>CDP-diglyceride pyrophosphorylase</fullName>
    </alternativeName>
    <alternativeName>
        <fullName>CDP-diglyceride synthase</fullName>
    </alternativeName>
    <alternativeName>
        <fullName>CTP:phosphatidate cytidylyltransferase</fullName>
    </alternativeName>
</protein>
<name>CDSA_PSEAE</name>
<proteinExistence type="inferred from homology"/>
<reference key="1">
    <citation type="journal article" date="1996" name="Gene">
        <title>Cloning of the Pseudomonas aeruginosa gene encoding CDP-diglyceride synthetase.</title>
        <authorList>
            <person name="Taguchi K."/>
            <person name="Fukutomi H."/>
            <person name="Kuroda A."/>
            <person name="Kato J."/>
            <person name="Ohtake H."/>
        </authorList>
    </citation>
    <scope>NUCLEOTIDE SEQUENCE [GENOMIC DNA]</scope>
    <source>
        <strain>ATCC 15692 / DSM 22644 / CIP 104116 / JCM 14847 / LMG 12228 / 1C / PRS 101 / PAO1</strain>
    </source>
</reference>
<reference key="2">
    <citation type="journal article" date="2000" name="Nature">
        <title>Complete genome sequence of Pseudomonas aeruginosa PAO1, an opportunistic pathogen.</title>
        <authorList>
            <person name="Stover C.K."/>
            <person name="Pham X.-Q.T."/>
            <person name="Erwin A.L."/>
            <person name="Mizoguchi S.D."/>
            <person name="Warrener P."/>
            <person name="Hickey M.J."/>
            <person name="Brinkman F.S.L."/>
            <person name="Hufnagle W.O."/>
            <person name="Kowalik D.J."/>
            <person name="Lagrou M."/>
            <person name="Garber R.L."/>
            <person name="Goltry L."/>
            <person name="Tolentino E."/>
            <person name="Westbrock-Wadman S."/>
            <person name="Yuan Y."/>
            <person name="Brody L.L."/>
            <person name="Coulter S.N."/>
            <person name="Folger K.R."/>
            <person name="Kas A."/>
            <person name="Larbig K."/>
            <person name="Lim R.M."/>
            <person name="Smith K.A."/>
            <person name="Spencer D.H."/>
            <person name="Wong G.K.-S."/>
            <person name="Wu Z."/>
            <person name="Paulsen I.T."/>
            <person name="Reizer J."/>
            <person name="Saier M.H. Jr."/>
            <person name="Hancock R.E.W."/>
            <person name="Lory S."/>
            <person name="Olson M.V."/>
        </authorList>
    </citation>
    <scope>NUCLEOTIDE SEQUENCE [LARGE SCALE GENOMIC DNA]</scope>
    <source>
        <strain>ATCC 15692 / DSM 22644 / CIP 104116 / JCM 14847 / LMG 12228 / 1C / PRS 101 / PAO1</strain>
    </source>
</reference>
<keyword id="KW-0997">Cell inner membrane</keyword>
<keyword id="KW-1003">Cell membrane</keyword>
<keyword id="KW-0444">Lipid biosynthesis</keyword>
<keyword id="KW-0443">Lipid metabolism</keyword>
<keyword id="KW-0472">Membrane</keyword>
<keyword id="KW-0548">Nucleotidyltransferase</keyword>
<keyword id="KW-0594">Phospholipid biosynthesis</keyword>
<keyword id="KW-1208">Phospholipid metabolism</keyword>
<keyword id="KW-1185">Reference proteome</keyword>
<keyword id="KW-0808">Transferase</keyword>
<keyword id="KW-0812">Transmembrane</keyword>
<keyword id="KW-1133">Transmembrane helix</keyword>
<organism>
    <name type="scientific">Pseudomonas aeruginosa (strain ATCC 15692 / DSM 22644 / CIP 104116 / JCM 14847 / LMG 12228 / 1C / PRS 101 / PAO1)</name>
    <dbReference type="NCBI Taxonomy" id="208964"/>
    <lineage>
        <taxon>Bacteria</taxon>
        <taxon>Pseudomonadati</taxon>
        <taxon>Pseudomonadota</taxon>
        <taxon>Gammaproteobacteria</taxon>
        <taxon>Pseudomonadales</taxon>
        <taxon>Pseudomonadaceae</taxon>
        <taxon>Pseudomonas</taxon>
    </lineage>
</organism>
<evidence type="ECO:0000255" key="1"/>
<evidence type="ECO:0000305" key="2"/>
<dbReference type="EC" id="2.7.7.41"/>
<dbReference type="EMBL" id="D50811">
    <property type="protein sequence ID" value="BAA09437.1"/>
    <property type="molecule type" value="Genomic_DNA"/>
</dbReference>
<dbReference type="EMBL" id="AE004091">
    <property type="protein sequence ID" value="AAG07039.1"/>
    <property type="molecule type" value="Genomic_DNA"/>
</dbReference>
<dbReference type="PIR" id="F83188">
    <property type="entry name" value="F83188"/>
</dbReference>
<dbReference type="PIR" id="JC4832">
    <property type="entry name" value="JC4832"/>
</dbReference>
<dbReference type="RefSeq" id="NP_252341.1">
    <property type="nucleotide sequence ID" value="NC_002516.2"/>
</dbReference>
<dbReference type="RefSeq" id="WP_003092388.1">
    <property type="nucleotide sequence ID" value="NZ_QZGE01000001.1"/>
</dbReference>
<dbReference type="SMR" id="Q59640"/>
<dbReference type="FunCoup" id="Q59640">
    <property type="interactions" value="503"/>
</dbReference>
<dbReference type="STRING" id="208964.PA3651"/>
<dbReference type="PaxDb" id="208964-PA3651"/>
<dbReference type="DNASU" id="880465"/>
<dbReference type="GeneID" id="880465"/>
<dbReference type="KEGG" id="pae:PA3651"/>
<dbReference type="PATRIC" id="fig|208964.12.peg.3820"/>
<dbReference type="PseudoCAP" id="PA3651"/>
<dbReference type="HOGENOM" id="CLU_037294_1_2_6"/>
<dbReference type="InParanoid" id="Q59640"/>
<dbReference type="OrthoDB" id="9799199at2"/>
<dbReference type="PhylomeDB" id="Q59640"/>
<dbReference type="BioCyc" id="PAER208964:G1FZ6-3721-MONOMER"/>
<dbReference type="UniPathway" id="UPA00557">
    <property type="reaction ID" value="UER00614"/>
</dbReference>
<dbReference type="Proteomes" id="UP000002438">
    <property type="component" value="Chromosome"/>
</dbReference>
<dbReference type="GO" id="GO:0005886">
    <property type="term" value="C:plasma membrane"/>
    <property type="evidence" value="ECO:0000318"/>
    <property type="project" value="GO_Central"/>
</dbReference>
<dbReference type="GO" id="GO:0004605">
    <property type="term" value="F:phosphatidate cytidylyltransferase activity"/>
    <property type="evidence" value="ECO:0000318"/>
    <property type="project" value="GO_Central"/>
</dbReference>
<dbReference type="GO" id="GO:0016024">
    <property type="term" value="P:CDP-diacylglycerol biosynthetic process"/>
    <property type="evidence" value="ECO:0000318"/>
    <property type="project" value="GO_Central"/>
</dbReference>
<dbReference type="InterPro" id="IPR000374">
    <property type="entry name" value="PC_trans"/>
</dbReference>
<dbReference type="PANTHER" id="PTHR46382">
    <property type="entry name" value="PHOSPHATIDATE CYTIDYLYLTRANSFERASE"/>
    <property type="match status" value="1"/>
</dbReference>
<dbReference type="PANTHER" id="PTHR46382:SF1">
    <property type="entry name" value="PHOSPHATIDATE CYTIDYLYLTRANSFERASE"/>
    <property type="match status" value="1"/>
</dbReference>
<dbReference type="Pfam" id="PF01148">
    <property type="entry name" value="CTP_transf_1"/>
    <property type="match status" value="1"/>
</dbReference>
<dbReference type="PROSITE" id="PS01315">
    <property type="entry name" value="CDS"/>
    <property type="match status" value="1"/>
</dbReference>